<proteinExistence type="inferred from homology"/>
<gene>
    <name evidence="1" type="primary">truA</name>
    <name type="ordered locus">EcE24377A_2612</name>
</gene>
<comment type="function">
    <text evidence="1">Formation of pseudouridine at positions 38, 39 and 40 in the anticodon stem and loop of transfer RNAs.</text>
</comment>
<comment type="catalytic activity">
    <reaction evidence="1">
        <text>uridine(38/39/40) in tRNA = pseudouridine(38/39/40) in tRNA</text>
        <dbReference type="Rhea" id="RHEA:22376"/>
        <dbReference type="Rhea" id="RHEA-COMP:10085"/>
        <dbReference type="Rhea" id="RHEA-COMP:10087"/>
        <dbReference type="ChEBI" id="CHEBI:65314"/>
        <dbReference type="ChEBI" id="CHEBI:65315"/>
        <dbReference type="EC" id="5.4.99.12"/>
    </reaction>
</comment>
<comment type="subunit">
    <text evidence="1">Homodimer.</text>
</comment>
<comment type="similarity">
    <text evidence="1">Belongs to the tRNA pseudouridine synthase TruA family.</text>
</comment>
<protein>
    <recommendedName>
        <fullName evidence="1">tRNA pseudouridine synthase A</fullName>
        <ecNumber evidence="1">5.4.99.12</ecNumber>
    </recommendedName>
    <alternativeName>
        <fullName evidence="1">tRNA pseudouridine(38-40) synthase</fullName>
    </alternativeName>
    <alternativeName>
        <fullName evidence="1">tRNA pseudouridylate synthase I</fullName>
    </alternativeName>
    <alternativeName>
        <fullName evidence="1">tRNA-uridine isomerase I</fullName>
    </alternativeName>
</protein>
<dbReference type="EC" id="5.4.99.12" evidence="1"/>
<dbReference type="EMBL" id="CP000800">
    <property type="protein sequence ID" value="ABV17103.1"/>
    <property type="molecule type" value="Genomic_DNA"/>
</dbReference>
<dbReference type="RefSeq" id="WP_001283598.1">
    <property type="nucleotide sequence ID" value="NC_009801.1"/>
</dbReference>
<dbReference type="SMR" id="A7ZPD3"/>
<dbReference type="KEGG" id="ecw:EcE24377A_2612"/>
<dbReference type="HOGENOM" id="CLU_014673_0_2_6"/>
<dbReference type="Proteomes" id="UP000001122">
    <property type="component" value="Chromosome"/>
</dbReference>
<dbReference type="GO" id="GO:0003723">
    <property type="term" value="F:RNA binding"/>
    <property type="evidence" value="ECO:0007669"/>
    <property type="project" value="InterPro"/>
</dbReference>
<dbReference type="GO" id="GO:0160147">
    <property type="term" value="F:tRNA pseudouridine(38-40) synthase activity"/>
    <property type="evidence" value="ECO:0007669"/>
    <property type="project" value="UniProtKB-EC"/>
</dbReference>
<dbReference type="GO" id="GO:0031119">
    <property type="term" value="P:tRNA pseudouridine synthesis"/>
    <property type="evidence" value="ECO:0007669"/>
    <property type="project" value="UniProtKB-UniRule"/>
</dbReference>
<dbReference type="CDD" id="cd02570">
    <property type="entry name" value="PseudoU_synth_EcTruA"/>
    <property type="match status" value="1"/>
</dbReference>
<dbReference type="FunFam" id="3.30.70.580:FF:000001">
    <property type="entry name" value="tRNA pseudouridine synthase A"/>
    <property type="match status" value="1"/>
</dbReference>
<dbReference type="FunFam" id="3.30.70.660:FF:000001">
    <property type="entry name" value="tRNA pseudouridine synthase A"/>
    <property type="match status" value="1"/>
</dbReference>
<dbReference type="Gene3D" id="3.30.70.660">
    <property type="entry name" value="Pseudouridine synthase I, catalytic domain, C-terminal subdomain"/>
    <property type="match status" value="1"/>
</dbReference>
<dbReference type="Gene3D" id="3.30.70.580">
    <property type="entry name" value="Pseudouridine synthase I, catalytic domain, N-terminal subdomain"/>
    <property type="match status" value="1"/>
</dbReference>
<dbReference type="HAMAP" id="MF_00171">
    <property type="entry name" value="TruA"/>
    <property type="match status" value="1"/>
</dbReference>
<dbReference type="InterPro" id="IPR020103">
    <property type="entry name" value="PsdUridine_synth_cat_dom_sf"/>
</dbReference>
<dbReference type="InterPro" id="IPR001406">
    <property type="entry name" value="PsdUridine_synth_TruA"/>
</dbReference>
<dbReference type="InterPro" id="IPR020097">
    <property type="entry name" value="PsdUridine_synth_TruA_a/b_dom"/>
</dbReference>
<dbReference type="InterPro" id="IPR020095">
    <property type="entry name" value="PsdUridine_synth_TruA_C"/>
</dbReference>
<dbReference type="InterPro" id="IPR020094">
    <property type="entry name" value="TruA/RsuA/RluB/E/F_N"/>
</dbReference>
<dbReference type="NCBIfam" id="TIGR00071">
    <property type="entry name" value="hisT_truA"/>
    <property type="match status" value="1"/>
</dbReference>
<dbReference type="PANTHER" id="PTHR11142">
    <property type="entry name" value="PSEUDOURIDYLATE SYNTHASE"/>
    <property type="match status" value="1"/>
</dbReference>
<dbReference type="PANTHER" id="PTHR11142:SF0">
    <property type="entry name" value="TRNA PSEUDOURIDINE SYNTHASE-LIKE 1"/>
    <property type="match status" value="1"/>
</dbReference>
<dbReference type="Pfam" id="PF01416">
    <property type="entry name" value="PseudoU_synth_1"/>
    <property type="match status" value="2"/>
</dbReference>
<dbReference type="PIRSF" id="PIRSF001430">
    <property type="entry name" value="tRNA_psdUrid_synth"/>
    <property type="match status" value="1"/>
</dbReference>
<dbReference type="SUPFAM" id="SSF55120">
    <property type="entry name" value="Pseudouridine synthase"/>
    <property type="match status" value="1"/>
</dbReference>
<feature type="chain" id="PRO_1000058304" description="tRNA pseudouridine synthase A">
    <location>
        <begin position="1"/>
        <end position="270"/>
    </location>
</feature>
<feature type="region of interest" description="RNA binding" evidence="1">
    <location>
        <begin position="107"/>
        <end position="111"/>
    </location>
</feature>
<feature type="region of interest" description="Interaction with tRNA" evidence="1">
    <location>
        <begin position="168"/>
        <end position="172"/>
    </location>
</feature>
<feature type="active site" description="Nucleophile" evidence="1">
    <location>
        <position position="60"/>
    </location>
</feature>
<feature type="binding site" evidence="1">
    <location>
        <position position="118"/>
    </location>
    <ligand>
        <name>substrate</name>
    </ligand>
</feature>
<feature type="site" description="Interaction with tRNA; Important for base-flipping" evidence="1">
    <location>
        <position position="58"/>
    </location>
</feature>
<feature type="site" description="Interaction with tRNA" evidence="1">
    <location>
        <position position="78"/>
    </location>
</feature>
<feature type="site" description="Interaction with tRNA" evidence="1">
    <location>
        <position position="110"/>
    </location>
</feature>
<feature type="site" description="Interaction with tRNA" evidence="1">
    <location>
        <position position="126"/>
    </location>
</feature>
<feature type="site" description="Interaction with tRNA" evidence="1">
    <location>
        <position position="139"/>
    </location>
</feature>
<accession>A7ZPD3</accession>
<reference key="1">
    <citation type="journal article" date="2008" name="J. Bacteriol.">
        <title>The pangenome structure of Escherichia coli: comparative genomic analysis of E. coli commensal and pathogenic isolates.</title>
        <authorList>
            <person name="Rasko D.A."/>
            <person name="Rosovitz M.J."/>
            <person name="Myers G.S.A."/>
            <person name="Mongodin E.F."/>
            <person name="Fricke W.F."/>
            <person name="Gajer P."/>
            <person name="Crabtree J."/>
            <person name="Sebaihia M."/>
            <person name="Thomson N.R."/>
            <person name="Chaudhuri R."/>
            <person name="Henderson I.R."/>
            <person name="Sperandio V."/>
            <person name="Ravel J."/>
        </authorList>
    </citation>
    <scope>NUCLEOTIDE SEQUENCE [LARGE SCALE GENOMIC DNA]</scope>
    <source>
        <strain>E24377A / ETEC</strain>
    </source>
</reference>
<organism>
    <name type="scientific">Escherichia coli O139:H28 (strain E24377A / ETEC)</name>
    <dbReference type="NCBI Taxonomy" id="331111"/>
    <lineage>
        <taxon>Bacteria</taxon>
        <taxon>Pseudomonadati</taxon>
        <taxon>Pseudomonadota</taxon>
        <taxon>Gammaproteobacteria</taxon>
        <taxon>Enterobacterales</taxon>
        <taxon>Enterobacteriaceae</taxon>
        <taxon>Escherichia</taxon>
    </lineage>
</organism>
<evidence type="ECO:0000255" key="1">
    <source>
        <dbReference type="HAMAP-Rule" id="MF_00171"/>
    </source>
</evidence>
<sequence length="270" mass="30413">MSDQQQPPVYKIALGIEYDGSRYYGWQRQNEVRSVQEKLEKALSQVANEPITVFCAGRTDAGVHGTGQVVHFETTAQRKDAAWTLGVNANLPGDIAVRWVKAVPDDFHARFSATARRYRYIIYNHRLRPAVLSKGVTHFYEPLDAERMHRAAQCLLGENDFTSFRAVQCQSRTPWRNVMHINVTRHGPYVVVDIKANAFVHHMVRNIVGSLMEVGAHNQPESWIAELLAAKDRTLAAATAKAEGLYLVAVDYPDRYDLPKPPMGPLFLAD</sequence>
<name>TRUA_ECO24</name>
<keyword id="KW-0413">Isomerase</keyword>
<keyword id="KW-1185">Reference proteome</keyword>
<keyword id="KW-0819">tRNA processing</keyword>